<keyword id="KW-0021">Allosteric enzyme</keyword>
<keyword id="KW-0067">ATP-binding</keyword>
<keyword id="KW-0963">Cytoplasm</keyword>
<keyword id="KW-0324">Glycolysis</keyword>
<keyword id="KW-0418">Kinase</keyword>
<keyword id="KW-0460">Magnesium</keyword>
<keyword id="KW-0479">Metal-binding</keyword>
<keyword id="KW-0547">Nucleotide-binding</keyword>
<keyword id="KW-0808">Transferase</keyword>
<proteinExistence type="inferred from homology"/>
<evidence type="ECO:0000255" key="1">
    <source>
        <dbReference type="HAMAP-Rule" id="MF_00339"/>
    </source>
</evidence>
<accession>B7LVC9</accession>
<comment type="function">
    <text evidence="1">Catalyzes the phosphorylation of D-fructose 6-phosphate to fructose 1,6-bisphosphate by ATP, the first committing step of glycolysis.</text>
</comment>
<comment type="catalytic activity">
    <reaction evidence="1">
        <text>beta-D-fructose 6-phosphate + ATP = beta-D-fructose 1,6-bisphosphate + ADP + H(+)</text>
        <dbReference type="Rhea" id="RHEA:16109"/>
        <dbReference type="ChEBI" id="CHEBI:15378"/>
        <dbReference type="ChEBI" id="CHEBI:30616"/>
        <dbReference type="ChEBI" id="CHEBI:32966"/>
        <dbReference type="ChEBI" id="CHEBI:57634"/>
        <dbReference type="ChEBI" id="CHEBI:456216"/>
        <dbReference type="EC" id="2.7.1.11"/>
    </reaction>
</comment>
<comment type="cofactor">
    <cofactor evidence="1">
        <name>Mg(2+)</name>
        <dbReference type="ChEBI" id="CHEBI:18420"/>
    </cofactor>
</comment>
<comment type="activity regulation">
    <text evidence="1">Allosterically activated by ADP and other diphosphonucleosides, and allosterically inhibited by phosphoenolpyruvate.</text>
</comment>
<comment type="pathway">
    <text evidence="1">Carbohydrate degradation; glycolysis; D-glyceraldehyde 3-phosphate and glycerone phosphate from D-glucose: step 3/4.</text>
</comment>
<comment type="subunit">
    <text evidence="1">Homotetramer.</text>
</comment>
<comment type="subcellular location">
    <subcellularLocation>
        <location evidence="1">Cytoplasm</location>
    </subcellularLocation>
</comment>
<comment type="similarity">
    <text evidence="1">Belongs to the phosphofructokinase type A (PFKA) family. ATP-dependent PFK group I subfamily. Prokaryotic clade 'B1' sub-subfamily.</text>
</comment>
<reference key="1">
    <citation type="journal article" date="2009" name="PLoS Genet.">
        <title>Organised genome dynamics in the Escherichia coli species results in highly diverse adaptive paths.</title>
        <authorList>
            <person name="Touchon M."/>
            <person name="Hoede C."/>
            <person name="Tenaillon O."/>
            <person name="Barbe V."/>
            <person name="Baeriswyl S."/>
            <person name="Bidet P."/>
            <person name="Bingen E."/>
            <person name="Bonacorsi S."/>
            <person name="Bouchier C."/>
            <person name="Bouvet O."/>
            <person name="Calteau A."/>
            <person name="Chiapello H."/>
            <person name="Clermont O."/>
            <person name="Cruveiller S."/>
            <person name="Danchin A."/>
            <person name="Diard M."/>
            <person name="Dossat C."/>
            <person name="Karoui M.E."/>
            <person name="Frapy E."/>
            <person name="Garry L."/>
            <person name="Ghigo J.M."/>
            <person name="Gilles A.M."/>
            <person name="Johnson J."/>
            <person name="Le Bouguenec C."/>
            <person name="Lescat M."/>
            <person name="Mangenot S."/>
            <person name="Martinez-Jehanne V."/>
            <person name="Matic I."/>
            <person name="Nassif X."/>
            <person name="Oztas S."/>
            <person name="Petit M.A."/>
            <person name="Pichon C."/>
            <person name="Rouy Z."/>
            <person name="Ruf C.S."/>
            <person name="Schneider D."/>
            <person name="Tourret J."/>
            <person name="Vacherie B."/>
            <person name="Vallenet D."/>
            <person name="Medigue C."/>
            <person name="Rocha E.P.C."/>
            <person name="Denamur E."/>
        </authorList>
    </citation>
    <scope>NUCLEOTIDE SEQUENCE [LARGE SCALE GENOMIC DNA]</scope>
    <source>
        <strain>ATCC 35469 / DSM 13698 / BCRC 15582 / CCUG 18766 / IAM 14443 / JCM 21226 / LMG 7866 / NBRC 102419 / NCTC 12128 / CDC 0568-73</strain>
    </source>
</reference>
<protein>
    <recommendedName>
        <fullName evidence="1">ATP-dependent 6-phosphofructokinase</fullName>
        <shortName evidence="1">ATP-PFK</shortName>
        <shortName evidence="1">Phosphofructokinase</shortName>
        <ecNumber evidence="1">2.7.1.11</ecNumber>
    </recommendedName>
    <alternativeName>
        <fullName evidence="1">Phosphohexokinase</fullName>
    </alternativeName>
</protein>
<organism>
    <name type="scientific">Escherichia fergusonii (strain ATCC 35469 / DSM 13698 / CCUG 18766 / IAM 14443 / JCM 21226 / LMG 7866 / NBRC 102419 / NCTC 12128 / CDC 0568-73)</name>
    <dbReference type="NCBI Taxonomy" id="585054"/>
    <lineage>
        <taxon>Bacteria</taxon>
        <taxon>Pseudomonadati</taxon>
        <taxon>Pseudomonadota</taxon>
        <taxon>Gammaproteobacteria</taxon>
        <taxon>Enterobacterales</taxon>
        <taxon>Enterobacteriaceae</taxon>
        <taxon>Escherichia</taxon>
    </lineage>
</organism>
<dbReference type="EC" id="2.7.1.11" evidence="1"/>
<dbReference type="EMBL" id="CU928158">
    <property type="protein sequence ID" value="CAQ91292.1"/>
    <property type="molecule type" value="Genomic_DNA"/>
</dbReference>
<dbReference type="RefSeq" id="WP_002431815.1">
    <property type="nucleotide sequence ID" value="NC_011740.1"/>
</dbReference>
<dbReference type="SMR" id="B7LVC9"/>
<dbReference type="GeneID" id="75059451"/>
<dbReference type="KEGG" id="efe:EFER_3857"/>
<dbReference type="HOGENOM" id="CLU_020655_0_1_6"/>
<dbReference type="OrthoDB" id="9802503at2"/>
<dbReference type="UniPathway" id="UPA00109">
    <property type="reaction ID" value="UER00182"/>
</dbReference>
<dbReference type="Proteomes" id="UP000000745">
    <property type="component" value="Chromosome"/>
</dbReference>
<dbReference type="GO" id="GO:0005945">
    <property type="term" value="C:6-phosphofructokinase complex"/>
    <property type="evidence" value="ECO:0007669"/>
    <property type="project" value="TreeGrafter"/>
</dbReference>
<dbReference type="GO" id="GO:0003872">
    <property type="term" value="F:6-phosphofructokinase activity"/>
    <property type="evidence" value="ECO:0007669"/>
    <property type="project" value="UniProtKB-UniRule"/>
</dbReference>
<dbReference type="GO" id="GO:0016208">
    <property type="term" value="F:AMP binding"/>
    <property type="evidence" value="ECO:0007669"/>
    <property type="project" value="TreeGrafter"/>
</dbReference>
<dbReference type="GO" id="GO:0005524">
    <property type="term" value="F:ATP binding"/>
    <property type="evidence" value="ECO:0007669"/>
    <property type="project" value="UniProtKB-KW"/>
</dbReference>
<dbReference type="GO" id="GO:0070095">
    <property type="term" value="F:fructose-6-phosphate binding"/>
    <property type="evidence" value="ECO:0007669"/>
    <property type="project" value="TreeGrafter"/>
</dbReference>
<dbReference type="GO" id="GO:0042802">
    <property type="term" value="F:identical protein binding"/>
    <property type="evidence" value="ECO:0007669"/>
    <property type="project" value="TreeGrafter"/>
</dbReference>
<dbReference type="GO" id="GO:0046872">
    <property type="term" value="F:metal ion binding"/>
    <property type="evidence" value="ECO:0007669"/>
    <property type="project" value="UniProtKB-KW"/>
</dbReference>
<dbReference type="GO" id="GO:0048029">
    <property type="term" value="F:monosaccharide binding"/>
    <property type="evidence" value="ECO:0007669"/>
    <property type="project" value="TreeGrafter"/>
</dbReference>
<dbReference type="GO" id="GO:0061621">
    <property type="term" value="P:canonical glycolysis"/>
    <property type="evidence" value="ECO:0007669"/>
    <property type="project" value="TreeGrafter"/>
</dbReference>
<dbReference type="GO" id="GO:0030388">
    <property type="term" value="P:fructose 1,6-bisphosphate metabolic process"/>
    <property type="evidence" value="ECO:0007669"/>
    <property type="project" value="TreeGrafter"/>
</dbReference>
<dbReference type="GO" id="GO:0006002">
    <property type="term" value="P:fructose 6-phosphate metabolic process"/>
    <property type="evidence" value="ECO:0007669"/>
    <property type="project" value="InterPro"/>
</dbReference>
<dbReference type="CDD" id="cd00763">
    <property type="entry name" value="Bacterial_PFK"/>
    <property type="match status" value="1"/>
</dbReference>
<dbReference type="FunFam" id="3.40.50.450:FF:000001">
    <property type="entry name" value="ATP-dependent 6-phosphofructokinase"/>
    <property type="match status" value="1"/>
</dbReference>
<dbReference type="FunFam" id="3.40.50.460:FF:000002">
    <property type="entry name" value="ATP-dependent 6-phosphofructokinase"/>
    <property type="match status" value="1"/>
</dbReference>
<dbReference type="Gene3D" id="3.40.50.450">
    <property type="match status" value="1"/>
</dbReference>
<dbReference type="Gene3D" id="3.40.50.460">
    <property type="entry name" value="Phosphofructokinase domain"/>
    <property type="match status" value="1"/>
</dbReference>
<dbReference type="HAMAP" id="MF_00339">
    <property type="entry name" value="Phosphofructokinase_I_B1"/>
    <property type="match status" value="1"/>
</dbReference>
<dbReference type="InterPro" id="IPR022953">
    <property type="entry name" value="ATP_PFK"/>
</dbReference>
<dbReference type="InterPro" id="IPR012003">
    <property type="entry name" value="ATP_PFK_prok-type"/>
</dbReference>
<dbReference type="InterPro" id="IPR012828">
    <property type="entry name" value="PFKA_ATP_prok"/>
</dbReference>
<dbReference type="InterPro" id="IPR015912">
    <property type="entry name" value="Phosphofructokinase_CS"/>
</dbReference>
<dbReference type="InterPro" id="IPR000023">
    <property type="entry name" value="Phosphofructokinase_dom"/>
</dbReference>
<dbReference type="InterPro" id="IPR035966">
    <property type="entry name" value="PKF_sf"/>
</dbReference>
<dbReference type="NCBIfam" id="TIGR02482">
    <property type="entry name" value="PFKA_ATP"/>
    <property type="match status" value="1"/>
</dbReference>
<dbReference type="NCBIfam" id="NF002872">
    <property type="entry name" value="PRK03202.1"/>
    <property type="match status" value="1"/>
</dbReference>
<dbReference type="PANTHER" id="PTHR13697:SF4">
    <property type="entry name" value="ATP-DEPENDENT 6-PHOSPHOFRUCTOKINASE"/>
    <property type="match status" value="1"/>
</dbReference>
<dbReference type="PANTHER" id="PTHR13697">
    <property type="entry name" value="PHOSPHOFRUCTOKINASE"/>
    <property type="match status" value="1"/>
</dbReference>
<dbReference type="Pfam" id="PF00365">
    <property type="entry name" value="PFK"/>
    <property type="match status" value="1"/>
</dbReference>
<dbReference type="PIRSF" id="PIRSF000532">
    <property type="entry name" value="ATP_PFK_prok"/>
    <property type="match status" value="1"/>
</dbReference>
<dbReference type="PRINTS" id="PR00476">
    <property type="entry name" value="PHFRCTKINASE"/>
</dbReference>
<dbReference type="SUPFAM" id="SSF53784">
    <property type="entry name" value="Phosphofructokinase"/>
    <property type="match status" value="1"/>
</dbReference>
<dbReference type="PROSITE" id="PS00433">
    <property type="entry name" value="PHOSPHOFRUCTOKINASE"/>
    <property type="match status" value="1"/>
</dbReference>
<name>PFKA_ESCF3</name>
<feature type="chain" id="PRO_1000120045" description="ATP-dependent 6-phosphofructokinase">
    <location>
        <begin position="1"/>
        <end position="320"/>
    </location>
</feature>
<feature type="active site" description="Proton acceptor" evidence="1">
    <location>
        <position position="128"/>
    </location>
</feature>
<feature type="binding site" evidence="1">
    <location>
        <position position="12"/>
    </location>
    <ligand>
        <name>ATP</name>
        <dbReference type="ChEBI" id="CHEBI:30616"/>
    </ligand>
</feature>
<feature type="binding site" evidence="1">
    <location>
        <begin position="22"/>
        <end position="26"/>
    </location>
    <ligand>
        <name>ADP</name>
        <dbReference type="ChEBI" id="CHEBI:456216"/>
        <note>allosteric activator; ligand shared between dimeric partners</note>
    </ligand>
</feature>
<feature type="binding site" evidence="1">
    <location>
        <begin position="55"/>
        <end position="60"/>
    </location>
    <ligand>
        <name>ADP</name>
        <dbReference type="ChEBI" id="CHEBI:456216"/>
        <note>allosteric activator; ligand shared between dimeric partners</note>
    </ligand>
</feature>
<feature type="binding site" evidence="1">
    <location>
        <begin position="73"/>
        <end position="74"/>
    </location>
    <ligand>
        <name>ATP</name>
        <dbReference type="ChEBI" id="CHEBI:30616"/>
    </ligand>
</feature>
<feature type="binding site" evidence="1">
    <location>
        <begin position="103"/>
        <end position="106"/>
    </location>
    <ligand>
        <name>ATP</name>
        <dbReference type="ChEBI" id="CHEBI:30616"/>
    </ligand>
</feature>
<feature type="binding site" evidence="1">
    <location>
        <position position="104"/>
    </location>
    <ligand>
        <name>Mg(2+)</name>
        <dbReference type="ChEBI" id="CHEBI:18420"/>
        <note>catalytic</note>
    </ligand>
</feature>
<feature type="binding site" description="in other chain" evidence="1">
    <location>
        <begin position="126"/>
        <end position="128"/>
    </location>
    <ligand>
        <name>substrate</name>
        <note>ligand shared between dimeric partners</note>
    </ligand>
</feature>
<feature type="binding site" description="in other chain" evidence="1">
    <location>
        <position position="155"/>
    </location>
    <ligand>
        <name>ADP</name>
        <dbReference type="ChEBI" id="CHEBI:456216"/>
        <note>allosteric activator; ligand shared between dimeric partners</note>
    </ligand>
</feature>
<feature type="binding site" evidence="1">
    <location>
        <position position="163"/>
    </location>
    <ligand>
        <name>substrate</name>
        <note>ligand shared between dimeric partners</note>
    </ligand>
</feature>
<feature type="binding site" description="in other chain" evidence="1">
    <location>
        <begin position="170"/>
        <end position="172"/>
    </location>
    <ligand>
        <name>substrate</name>
        <note>ligand shared between dimeric partners</note>
    </ligand>
</feature>
<feature type="binding site" description="in other chain" evidence="1">
    <location>
        <begin position="186"/>
        <end position="188"/>
    </location>
    <ligand>
        <name>ADP</name>
        <dbReference type="ChEBI" id="CHEBI:456216"/>
        <note>allosteric activator; ligand shared between dimeric partners</note>
    </ligand>
</feature>
<feature type="binding site" description="in other chain" evidence="1">
    <location>
        <position position="212"/>
    </location>
    <ligand>
        <name>ADP</name>
        <dbReference type="ChEBI" id="CHEBI:456216"/>
        <note>allosteric activator; ligand shared between dimeric partners</note>
    </ligand>
</feature>
<feature type="binding site" description="in other chain" evidence="1">
    <location>
        <begin position="214"/>
        <end position="216"/>
    </location>
    <ligand>
        <name>ADP</name>
        <dbReference type="ChEBI" id="CHEBI:456216"/>
        <note>allosteric activator; ligand shared between dimeric partners</note>
    </ligand>
</feature>
<feature type="binding site" description="in other chain" evidence="1">
    <location>
        <position position="223"/>
    </location>
    <ligand>
        <name>substrate</name>
        <note>ligand shared between dimeric partners</note>
    </ligand>
</feature>
<feature type="binding site" evidence="1">
    <location>
        <position position="244"/>
    </location>
    <ligand>
        <name>substrate</name>
        <note>ligand shared between dimeric partners</note>
    </ligand>
</feature>
<feature type="binding site" description="in other chain" evidence="1">
    <location>
        <begin position="250"/>
        <end position="253"/>
    </location>
    <ligand>
        <name>substrate</name>
        <note>ligand shared between dimeric partners</note>
    </ligand>
</feature>
<gene>
    <name evidence="1" type="primary">pfkA</name>
    <name type="ordered locus">EFER_3857</name>
</gene>
<sequence length="320" mass="34840">MIKKIGVLTSGGDAPGMNAAIRGVVRAALSEGLEVMGIYDGYLGLYEDRMVQLDRYSVSDMINRGGTFLGSARFPEFRDENIRAVAIENLKKRGIDALVVIGGDGSYMGAMRLTEMGFPCIGLPGTIDNDIKGTDYTIGFFTALSTVVEAIDRLRDTSSSHQRISVVEVMGRYCGDLTLAAAIAGGCEFVVVPEVEFSREDLVNEIKAGIAKGKKHAIVAITEHMCDVDELAHFIEKETGRETRATVLGHIQRGGSPVPYDRILASRMGAYAIELLLAGYGGRCVGIQNEQLVHHDIIDAIENMKRPFKGDWLECAKKLY</sequence>